<comment type="function">
    <text>Regulatory photoreceptor which exists in two forms that are reversibly interconvertible by light: the Pr form that absorbs maximally in the red region of the spectrum and the Pfr form that absorbs maximally in the far-red region. Photoconversion of Pr to Pfr induces an array of morphogenic responses, whereas reconversion of Pfr to Pr cancels the induction of those responses. Pfr controls the expression of a number of nuclear genes including those encoding the small subunit of ribulose-bisphosphate carboxylase, chlorophyll A/B binding protein, protochlorophyllide reductase, rRNA, etc. It also controls the expression of its own gene(s) in a negative feedback fashion.</text>
</comment>
<comment type="subunit">
    <text>Homodimer.</text>
</comment>
<comment type="interaction">
    <interactant intactId="EBI-624366">
        <id>P14714</id>
    </interactant>
    <interactant intactId="EBI-300727">
        <id>P14713</id>
        <label>PHYB</label>
    </interactant>
    <organismsDiffer>false</organismsDiffer>
    <experiments>5</experiments>
</comment>
<comment type="interaction">
    <interactant intactId="EBI-624366">
        <id>P14714</id>
    </interactant>
    <interactant intactId="EBI-624382">
        <id>P42497</id>
        <label>PHYD</label>
    </interactant>
    <organismsDiffer>false</organismsDiffer>
    <experiments>2</experiments>
</comment>
<comment type="PTM">
    <text evidence="1">Contains one covalently linked phytochromobilin chromophore.</text>
</comment>
<comment type="similarity">
    <text evidence="4">Belongs to the phytochrome family.</text>
</comment>
<reference key="1">
    <citation type="journal article" date="1989" name="Genes Dev.">
        <title>Novel phytochrome sequences in Arabidopsis thaliana: structure, evolution, and differential expression of a plant regulatory photoreceptor family.</title>
        <authorList>
            <person name="Sharrock R.A."/>
            <person name="Quail P.H."/>
        </authorList>
    </citation>
    <scope>NUCLEOTIDE SEQUENCE [MRNA]</scope>
    <source>
        <strain>cv. Columbia</strain>
    </source>
</reference>
<reference key="2">
    <citation type="journal article" date="1994" name="Plant Physiol.">
        <title>The PHYC gene of Arabidopsis. Absence of the third intron found in PHYA and PHYB.</title>
        <authorList>
            <person name="Cowl J.S."/>
            <person name="Hartley N."/>
            <person name="Xie D."/>
            <person name="Whitelam G.C."/>
            <person name="Murphy G."/>
            <person name="Harberd N.P."/>
        </authorList>
    </citation>
    <scope>NUCLEOTIDE SEQUENCE [GENOMIC DNA]</scope>
</reference>
<reference key="3">
    <citation type="journal article" date="1997" name="DNA Res.">
        <title>Structural analysis of Arabidopsis thaliana chromosome 5. I. Sequence features of the 1.6 Mb regions covered by twenty physically assigned P1 clones.</title>
        <authorList>
            <person name="Sato S."/>
            <person name="Kotani H."/>
            <person name="Nakamura Y."/>
            <person name="Kaneko T."/>
            <person name="Asamizu E."/>
            <person name="Fukami M."/>
            <person name="Miyajima N."/>
            <person name="Tabata S."/>
        </authorList>
    </citation>
    <scope>NUCLEOTIDE SEQUENCE [LARGE SCALE GENOMIC DNA]</scope>
    <source>
        <strain>cv. Columbia</strain>
    </source>
</reference>
<reference key="4">
    <citation type="journal article" date="2017" name="Plant J.">
        <title>Araport11: a complete reannotation of the Arabidopsis thaliana reference genome.</title>
        <authorList>
            <person name="Cheng C.Y."/>
            <person name="Krishnakumar V."/>
            <person name="Chan A.P."/>
            <person name="Thibaud-Nissen F."/>
            <person name="Schobel S."/>
            <person name="Town C.D."/>
        </authorList>
    </citation>
    <scope>GENOME REANNOTATION</scope>
    <source>
        <strain>cv. Columbia</strain>
    </source>
</reference>
<organism>
    <name type="scientific">Arabidopsis thaliana</name>
    <name type="common">Mouse-ear cress</name>
    <dbReference type="NCBI Taxonomy" id="3702"/>
    <lineage>
        <taxon>Eukaryota</taxon>
        <taxon>Viridiplantae</taxon>
        <taxon>Streptophyta</taxon>
        <taxon>Embryophyta</taxon>
        <taxon>Tracheophyta</taxon>
        <taxon>Spermatophyta</taxon>
        <taxon>Magnoliopsida</taxon>
        <taxon>eudicotyledons</taxon>
        <taxon>Gunneridae</taxon>
        <taxon>Pentapetalae</taxon>
        <taxon>rosids</taxon>
        <taxon>malvids</taxon>
        <taxon>Brassicales</taxon>
        <taxon>Brassicaceae</taxon>
        <taxon>Camelineae</taxon>
        <taxon>Arabidopsis</taxon>
    </lineage>
</organism>
<evidence type="ECO:0000250" key="1"/>
<evidence type="ECO:0000255" key="2">
    <source>
        <dbReference type="PROSITE-ProRule" id="PRU00107"/>
    </source>
</evidence>
<evidence type="ECO:0000255" key="3">
    <source>
        <dbReference type="PROSITE-ProRule" id="PRU00140"/>
    </source>
</evidence>
<evidence type="ECO:0000305" key="4"/>
<dbReference type="EMBL" id="X17343">
    <property type="protein sequence ID" value="CAA35223.1"/>
    <property type="molecule type" value="mRNA"/>
</dbReference>
<dbReference type="EMBL" id="Z32538">
    <property type="protein sequence ID" value="CAA83549.1"/>
    <property type="molecule type" value="Genomic_DNA"/>
</dbReference>
<dbReference type="EMBL" id="AB005236">
    <property type="protein sequence ID" value="BAB09925.1"/>
    <property type="molecule type" value="Genomic_DNA"/>
</dbReference>
<dbReference type="EMBL" id="CP002688">
    <property type="protein sequence ID" value="AED94021.1"/>
    <property type="molecule type" value="Genomic_DNA"/>
</dbReference>
<dbReference type="PIR" id="C33473">
    <property type="entry name" value="FKMUC"/>
</dbReference>
<dbReference type="RefSeq" id="NP_198433.1">
    <property type="nucleotide sequence ID" value="NM_122975.3"/>
</dbReference>
<dbReference type="SMR" id="P14714"/>
<dbReference type="BioGRID" id="18823">
    <property type="interactions" value="7"/>
</dbReference>
<dbReference type="FunCoup" id="P14714">
    <property type="interactions" value="428"/>
</dbReference>
<dbReference type="IntAct" id="P14714">
    <property type="interactions" value="3"/>
</dbReference>
<dbReference type="STRING" id="3702.P14714"/>
<dbReference type="PaxDb" id="3702-AT5G35840.1"/>
<dbReference type="ProteomicsDB" id="234752"/>
<dbReference type="EnsemblPlants" id="AT5G35840.1">
    <property type="protein sequence ID" value="AT5G35840.1"/>
    <property type="gene ID" value="AT5G35840"/>
</dbReference>
<dbReference type="GeneID" id="833570"/>
<dbReference type="Gramene" id="AT5G35840.1">
    <property type="protein sequence ID" value="AT5G35840.1"/>
    <property type="gene ID" value="AT5G35840"/>
</dbReference>
<dbReference type="KEGG" id="ath:AT5G35840"/>
<dbReference type="Araport" id="AT5G35840"/>
<dbReference type="TAIR" id="AT5G35840">
    <property type="gene designation" value="PHYC"/>
</dbReference>
<dbReference type="eggNOG" id="ENOG502QT1B">
    <property type="taxonomic scope" value="Eukaryota"/>
</dbReference>
<dbReference type="HOGENOM" id="CLU_010418_0_0_1"/>
<dbReference type="InParanoid" id="P14714"/>
<dbReference type="OMA" id="QEYHDGS"/>
<dbReference type="PhylomeDB" id="P14714"/>
<dbReference type="PRO" id="PR:P14714"/>
<dbReference type="Proteomes" id="UP000006548">
    <property type="component" value="Chromosome 5"/>
</dbReference>
<dbReference type="ExpressionAtlas" id="P14714">
    <property type="expression patterns" value="baseline and differential"/>
</dbReference>
<dbReference type="GO" id="GO:0009881">
    <property type="term" value="F:photoreceptor activity"/>
    <property type="evidence" value="ECO:0007669"/>
    <property type="project" value="UniProtKB-KW"/>
</dbReference>
<dbReference type="GO" id="GO:0042803">
    <property type="term" value="F:protein homodimerization activity"/>
    <property type="evidence" value="ECO:0007669"/>
    <property type="project" value="InterPro"/>
</dbReference>
<dbReference type="GO" id="GO:0009584">
    <property type="term" value="P:detection of visible light"/>
    <property type="evidence" value="ECO:0007669"/>
    <property type="project" value="InterPro"/>
</dbReference>
<dbReference type="GO" id="GO:0009585">
    <property type="term" value="P:red, far-red light phototransduction"/>
    <property type="evidence" value="ECO:0007669"/>
    <property type="project" value="InterPro"/>
</dbReference>
<dbReference type="GO" id="GO:0006355">
    <property type="term" value="P:regulation of DNA-templated transcription"/>
    <property type="evidence" value="ECO:0007669"/>
    <property type="project" value="InterPro"/>
</dbReference>
<dbReference type="GO" id="GO:0009637">
    <property type="term" value="P:response to blue light"/>
    <property type="evidence" value="ECO:0007669"/>
    <property type="project" value="UniProtKB-ARBA"/>
</dbReference>
<dbReference type="CDD" id="cd16932">
    <property type="entry name" value="HATPase_Phy-like"/>
    <property type="match status" value="1"/>
</dbReference>
<dbReference type="CDD" id="cd00130">
    <property type="entry name" value="PAS"/>
    <property type="match status" value="2"/>
</dbReference>
<dbReference type="FunFam" id="3.30.450.20:FF:000039">
    <property type="entry name" value="Phytochrome"/>
    <property type="match status" value="1"/>
</dbReference>
<dbReference type="FunFam" id="3.30.450.270:FF:000001">
    <property type="entry name" value="Phytochrome"/>
    <property type="match status" value="1"/>
</dbReference>
<dbReference type="Gene3D" id="3.30.450.270">
    <property type="match status" value="1"/>
</dbReference>
<dbReference type="Gene3D" id="3.30.450.40">
    <property type="match status" value="1"/>
</dbReference>
<dbReference type="Gene3D" id="3.30.565.10">
    <property type="entry name" value="Histidine kinase-like ATPase, C-terminal domain"/>
    <property type="match status" value="1"/>
</dbReference>
<dbReference type="Gene3D" id="3.30.450.20">
    <property type="entry name" value="PAS domain"/>
    <property type="match status" value="3"/>
</dbReference>
<dbReference type="InterPro" id="IPR003018">
    <property type="entry name" value="GAF"/>
</dbReference>
<dbReference type="InterPro" id="IPR029016">
    <property type="entry name" value="GAF-like_dom_sf"/>
</dbReference>
<dbReference type="InterPro" id="IPR036890">
    <property type="entry name" value="HATPase_C_sf"/>
</dbReference>
<dbReference type="InterPro" id="IPR005467">
    <property type="entry name" value="His_kinase_dom"/>
</dbReference>
<dbReference type="InterPro" id="IPR001610">
    <property type="entry name" value="PAC"/>
</dbReference>
<dbReference type="InterPro" id="IPR000014">
    <property type="entry name" value="PAS"/>
</dbReference>
<dbReference type="InterPro" id="IPR035965">
    <property type="entry name" value="PAS-like_dom_sf"/>
</dbReference>
<dbReference type="InterPro" id="IPR013654">
    <property type="entry name" value="PAS_2"/>
</dbReference>
<dbReference type="InterPro" id="IPR013767">
    <property type="entry name" value="PAS_fold"/>
</dbReference>
<dbReference type="InterPro" id="IPR044767">
    <property type="entry name" value="Phy_HATPase-like"/>
</dbReference>
<dbReference type="InterPro" id="IPR016132">
    <property type="entry name" value="Phyto_chromo_attachment"/>
</dbReference>
<dbReference type="InterPro" id="IPR013516">
    <property type="entry name" value="Phyto_chromo_BS"/>
</dbReference>
<dbReference type="InterPro" id="IPR001294">
    <property type="entry name" value="Phytochrome"/>
</dbReference>
<dbReference type="InterPro" id="IPR012129">
    <property type="entry name" value="Phytochrome_A-E"/>
</dbReference>
<dbReference type="InterPro" id="IPR013515">
    <property type="entry name" value="Phytochrome_cen-reg"/>
</dbReference>
<dbReference type="InterPro" id="IPR043150">
    <property type="entry name" value="Phytochrome_PHY_sf"/>
</dbReference>
<dbReference type="NCBIfam" id="TIGR00229">
    <property type="entry name" value="sensory_box"/>
    <property type="match status" value="2"/>
</dbReference>
<dbReference type="PANTHER" id="PTHR47876">
    <property type="entry name" value="OS08G0260000 PROTEIN"/>
    <property type="match status" value="1"/>
</dbReference>
<dbReference type="PANTHER" id="PTHR47876:SF3">
    <property type="entry name" value="PHYTOCHROME 1"/>
    <property type="match status" value="1"/>
</dbReference>
<dbReference type="Pfam" id="PF01590">
    <property type="entry name" value="GAF"/>
    <property type="match status" value="1"/>
</dbReference>
<dbReference type="Pfam" id="PF02518">
    <property type="entry name" value="HATPase_c"/>
    <property type="match status" value="1"/>
</dbReference>
<dbReference type="Pfam" id="PF00989">
    <property type="entry name" value="PAS"/>
    <property type="match status" value="2"/>
</dbReference>
<dbReference type="Pfam" id="PF08446">
    <property type="entry name" value="PAS_2"/>
    <property type="match status" value="1"/>
</dbReference>
<dbReference type="Pfam" id="PF00360">
    <property type="entry name" value="PHY"/>
    <property type="match status" value="1"/>
</dbReference>
<dbReference type="PIRSF" id="PIRSF000084">
    <property type="entry name" value="Phytochrome"/>
    <property type="match status" value="1"/>
</dbReference>
<dbReference type="PRINTS" id="PR01033">
    <property type="entry name" value="PHYTOCHROME"/>
</dbReference>
<dbReference type="SMART" id="SM00065">
    <property type="entry name" value="GAF"/>
    <property type="match status" value="1"/>
</dbReference>
<dbReference type="SMART" id="SM00387">
    <property type="entry name" value="HATPase_c"/>
    <property type="match status" value="1"/>
</dbReference>
<dbReference type="SMART" id="SM00086">
    <property type="entry name" value="PAC"/>
    <property type="match status" value="1"/>
</dbReference>
<dbReference type="SMART" id="SM00091">
    <property type="entry name" value="PAS"/>
    <property type="match status" value="2"/>
</dbReference>
<dbReference type="SUPFAM" id="SSF55874">
    <property type="entry name" value="ATPase domain of HSP90 chaperone/DNA topoisomerase II/histidine kinase"/>
    <property type="match status" value="1"/>
</dbReference>
<dbReference type="SUPFAM" id="SSF55781">
    <property type="entry name" value="GAF domain-like"/>
    <property type="match status" value="2"/>
</dbReference>
<dbReference type="SUPFAM" id="SSF55785">
    <property type="entry name" value="PYP-like sensor domain (PAS domain)"/>
    <property type="match status" value="3"/>
</dbReference>
<dbReference type="PROSITE" id="PS50109">
    <property type="entry name" value="HIS_KIN"/>
    <property type="match status" value="1"/>
</dbReference>
<dbReference type="PROSITE" id="PS50112">
    <property type="entry name" value="PAS"/>
    <property type="match status" value="2"/>
</dbReference>
<dbReference type="PROSITE" id="PS00245">
    <property type="entry name" value="PHYTOCHROME_1"/>
    <property type="match status" value="1"/>
</dbReference>
<dbReference type="PROSITE" id="PS50046">
    <property type="entry name" value="PHYTOCHROME_2"/>
    <property type="match status" value="1"/>
</dbReference>
<name>PHYC_ARATH</name>
<protein>
    <recommendedName>
        <fullName>Phytochrome C</fullName>
    </recommendedName>
</protein>
<gene>
    <name type="primary">PHYC</name>
    <name type="ordered locus">At5g35840</name>
    <name type="ORF">MIK22.15</name>
</gene>
<accession>P14714</accession>
<sequence>MSSNTSRSCSTRSRQNSRVSSQVLVDAKLHGNFEESERLFDYSASINLNMPSSSCEIPSSAVSTYLQKIQRGMLIQPFGCLIVVDEKNLKVIAFSENTQEMLGLIPHTVPSMEQREALTIGTDVKSLFLSPGCSALEKAVDFGEISILNPITLHCRSSSKPFYAILHRIEEGLVIDLEPVSPDEVPVTAAGALRSYKLAAKSISRLQALPSGNMLLLCDALVKEVSELTGYDRVMVYKFHEDGHGEVIAECCREDMEPYLGLHYSATDIPQASRFLFMRNKVRMICDCSAVPVKVVQDKSLSQPISLSGSTLRAPHGCHAQYMSNMGSVASLVMSVTINGSDSDEMNRDLQTGRHLWGLVVCHHASPRFVPFPLRYACEFLTQVFGVQINKEAESAVLLKEKRILQTQSVLCDMLFRNAPIGIVTQSPNIMDLVKCDGAALYYRDNLWSLGVTPTETQIRDLIDWVLKSHGGNTGFTTESLMESGYPDASVLGESICGMAAVYISEKDFLFWFRSSTAKQIKWGGARHDPNDRDGKRMHPRSSFKAFMEIVRWKSVPWDDMEMDAINSLQLIIKGSLQEEHSKTVVDVPLVDNRVQKVDELCVIVNEMVRLIDTAAVPIFAVDASGVINGWNSKAAEVTGLAVEQAIGKPVSDLVEDDSVETVKNMLALALEGSEERGAEIRIRAFGPKRKSSPVELVVNTCCSRDMTNNVLGVCFIGQDVTGQKTLTENYSRVKGDYARIMWSPSTLIPPIFITNENGVCSEWNNAMQKLSGIKREEVVNKILLGEVFTTDDYGCCLKDHDTLTKLRIGFNAVISGQKNIEKLLFGFYHRDGSFIEALLSANKRTDIEGKVTGVLCFLQVPSPELQYALQVQQISEHAIACALNKLAYLRHEVKDPEKAISFLQDLLHSSGLSEDQKRLLRTSVLCREQLAKVISDSDIEGIEEGYVELDCSEFGLQESLEAVVKQVMELSIERKVQISCDYPQEVSSMRLYGDNLRLQQILSETLLSSIRFTPALRGLCVSFKVIARIEAIGKRMKRVELEFRIIHPAPGLPEDLVREMFQPLRKGTSREGLGLHITQKLVKLMERGTLRYLRESEMSAFVILTEFPLI</sequence>
<feature type="chain" id="PRO_0000171964" description="Phytochrome C">
    <location>
        <begin position="1"/>
        <end position="1111"/>
    </location>
</feature>
<feature type="domain" description="GAF">
    <location>
        <begin position="213"/>
        <end position="393"/>
    </location>
</feature>
<feature type="domain" description="PAS 1" evidence="3">
    <location>
        <begin position="604"/>
        <end position="674"/>
    </location>
</feature>
<feature type="domain" description="PAS 2" evidence="3">
    <location>
        <begin position="737"/>
        <end position="808"/>
    </location>
</feature>
<feature type="domain" description="Histidine kinase" evidence="2">
    <location>
        <begin position="889"/>
        <end position="1111"/>
    </location>
</feature>
<feature type="binding site" description="covalent" evidence="1">
    <location>
        <position position="318"/>
    </location>
    <ligand>
        <name>phytochromobilin</name>
        <dbReference type="ChEBI" id="CHEBI:189064"/>
    </ligand>
</feature>
<feature type="sequence conflict" description="In Ref. 2; CAA83549." evidence="4" ref="2">
    <original>C</original>
    <variation>Y</variation>
    <location>
        <position position="9"/>
    </location>
</feature>
<feature type="sequence conflict" description="In Ref. 2; CAA83549." evidence="4" ref="2">
    <original>E</original>
    <variation>Q</variation>
    <location>
        <position position="137"/>
    </location>
</feature>
<feature type="sequence conflict" description="In Ref. 2; CAA83549." evidence="4" ref="2">
    <original>G</original>
    <variation>S</variation>
    <location>
        <position position="230"/>
    </location>
</feature>
<feature type="sequence conflict" description="In Ref. 2; CAA83549." evidence="4" ref="2">
    <original>N</original>
    <variation>K</variation>
    <location>
        <position position="446"/>
    </location>
</feature>
<feature type="sequence conflict" description="In Ref. 2; CAA83549." evidence="4" ref="2">
    <original>S</original>
    <variation>T</variation>
    <location>
        <position position="505"/>
    </location>
</feature>
<feature type="sequence conflict" description="In Ref. 2; CAA83549." evidence="4" ref="2">
    <original>T</original>
    <variation>K</variation>
    <location>
        <position position="726"/>
    </location>
</feature>
<feature type="sequence conflict" description="In Ref. 2; CAA83549." evidence="4" ref="2">
    <original>K</original>
    <variation>Q</variation>
    <location>
        <position position="735"/>
    </location>
</feature>
<feature type="sequence conflict" description="In Ref. 2; CAA83549." evidence="4" ref="2">
    <original>I</original>
    <variation>M</variation>
    <location>
        <position position="754"/>
    </location>
</feature>
<feature type="sequence conflict" description="In Ref. 2; CAA83549." evidence="4" ref="2">
    <original>E</original>
    <variation>K</variation>
    <location>
        <position position="822"/>
    </location>
</feature>
<feature type="sequence conflict" description="In Ref. 2; CAA83549." evidence="4" ref="2">
    <original>LR</original>
    <variation>WK</variation>
    <location>
        <begin position="1017"/>
        <end position="1018"/>
    </location>
</feature>
<proteinExistence type="evidence at protein level"/>
<keyword id="KW-0157">Chromophore</keyword>
<keyword id="KW-0600">Photoreceptor protein</keyword>
<keyword id="KW-0675">Receptor</keyword>
<keyword id="KW-1185">Reference proteome</keyword>
<keyword id="KW-0677">Repeat</keyword>
<keyword id="KW-0716">Sensory transduction</keyword>
<keyword id="KW-0804">Transcription</keyword>
<keyword id="KW-0805">Transcription regulation</keyword>